<comment type="function">
    <text evidence="1">Catalyzes a mechanistically unusual reaction, the ATP-dependent insertion of CO2 between the N7 and N8 nitrogen atoms of 7,8-diaminopelargonic acid (DAPA, also called 7,8-diammoniononanoate) to form a ureido ring.</text>
</comment>
<comment type="catalytic activity">
    <reaction evidence="1">
        <text>(7R,8S)-7,8-diammoniononanoate + CO2 + ATP = (4R,5S)-dethiobiotin + ADP + phosphate + 3 H(+)</text>
        <dbReference type="Rhea" id="RHEA:15805"/>
        <dbReference type="ChEBI" id="CHEBI:15378"/>
        <dbReference type="ChEBI" id="CHEBI:16526"/>
        <dbReference type="ChEBI" id="CHEBI:30616"/>
        <dbReference type="ChEBI" id="CHEBI:43474"/>
        <dbReference type="ChEBI" id="CHEBI:149469"/>
        <dbReference type="ChEBI" id="CHEBI:149473"/>
        <dbReference type="ChEBI" id="CHEBI:456216"/>
        <dbReference type="EC" id="6.3.3.3"/>
    </reaction>
</comment>
<comment type="cofactor">
    <cofactor evidence="1">
        <name>Mg(2+)</name>
        <dbReference type="ChEBI" id="CHEBI:18420"/>
    </cofactor>
</comment>
<comment type="pathway">
    <text evidence="1">Cofactor biosynthesis; biotin biosynthesis; biotin from 7,8-diaminononanoate: step 1/2.</text>
</comment>
<comment type="subunit">
    <text evidence="1">Homodimer.</text>
</comment>
<comment type="subcellular location">
    <subcellularLocation>
        <location evidence="1">Cytoplasm</location>
    </subcellularLocation>
</comment>
<comment type="similarity">
    <text evidence="1">Belongs to the dethiobiotin synthetase family.</text>
</comment>
<comment type="sequence caution" evidence="2">
    <conflict type="erroneous initiation">
        <sequence resource="EMBL-CDS" id="AAG56580"/>
    </conflict>
    <text>Extended N-terminus.</text>
</comment>
<gene>
    <name evidence="1" type="primary">bioD2</name>
    <name type="synonym">ynfK</name>
    <name type="ordered locus">Z2585</name>
    <name type="ordered locus">ECs2299</name>
</gene>
<proteinExistence type="inferred from homology"/>
<feature type="chain" id="PRO_0000187964" description="ATP-dependent dethiobiotin synthetase BioD 2">
    <location>
        <begin position="1"/>
        <end position="231"/>
    </location>
</feature>
<feature type="active site" evidence="1">
    <location>
        <position position="38"/>
    </location>
</feature>
<feature type="binding site" evidence="1">
    <location>
        <begin position="13"/>
        <end position="18"/>
    </location>
    <ligand>
        <name>ATP</name>
        <dbReference type="ChEBI" id="CHEBI:30616"/>
    </ligand>
</feature>
<feature type="binding site" evidence="1">
    <location>
        <position position="17"/>
    </location>
    <ligand>
        <name>Mg(2+)</name>
        <dbReference type="ChEBI" id="CHEBI:18420"/>
    </ligand>
</feature>
<feature type="binding site" evidence="1">
    <location>
        <position position="55"/>
    </location>
    <ligand>
        <name>ATP</name>
        <dbReference type="ChEBI" id="CHEBI:30616"/>
    </ligand>
</feature>
<feature type="binding site" evidence="1">
    <location>
        <position position="55"/>
    </location>
    <ligand>
        <name>Mg(2+)</name>
        <dbReference type="ChEBI" id="CHEBI:18420"/>
    </ligand>
</feature>
<feature type="binding site" evidence="1">
    <location>
        <begin position="112"/>
        <end position="115"/>
    </location>
    <ligand>
        <name>ATP</name>
        <dbReference type="ChEBI" id="CHEBI:30616"/>
    </ligand>
</feature>
<feature type="binding site" evidence="1">
    <location>
        <position position="112"/>
    </location>
    <ligand>
        <name>Mg(2+)</name>
        <dbReference type="ChEBI" id="CHEBI:18420"/>
    </ligand>
</feature>
<feature type="binding site" evidence="1">
    <location>
        <begin position="172"/>
        <end position="173"/>
    </location>
    <ligand>
        <name>ATP</name>
        <dbReference type="ChEBI" id="CHEBI:30616"/>
    </ligand>
</feature>
<feature type="binding site" evidence="1">
    <location>
        <begin position="201"/>
        <end position="203"/>
    </location>
    <ligand>
        <name>ATP</name>
        <dbReference type="ChEBI" id="CHEBI:30616"/>
    </ligand>
</feature>
<feature type="binding site" evidence="1">
    <location>
        <position position="208"/>
    </location>
    <ligand>
        <name>ATP</name>
        <dbReference type="ChEBI" id="CHEBI:30616"/>
    </ligand>
</feature>
<dbReference type="EC" id="6.3.3.3" evidence="1"/>
<dbReference type="EMBL" id="AE005174">
    <property type="protein sequence ID" value="AAG56580.1"/>
    <property type="status" value="ALT_INIT"/>
    <property type="molecule type" value="Genomic_DNA"/>
</dbReference>
<dbReference type="EMBL" id="BA000007">
    <property type="protein sequence ID" value="BAB35722.2"/>
    <property type="molecule type" value="Genomic_DNA"/>
</dbReference>
<dbReference type="RefSeq" id="NP_310326.2">
    <property type="nucleotide sequence ID" value="NC_002695.1"/>
</dbReference>
<dbReference type="SMR" id="P0A6F0"/>
<dbReference type="STRING" id="155864.Z2585"/>
<dbReference type="GeneID" id="913895"/>
<dbReference type="KEGG" id="ece:Z2585"/>
<dbReference type="KEGG" id="ecs:ECs_2299"/>
<dbReference type="PATRIC" id="fig|386585.9.peg.2407"/>
<dbReference type="eggNOG" id="COG0132">
    <property type="taxonomic scope" value="Bacteria"/>
</dbReference>
<dbReference type="HOGENOM" id="CLU_072551_0_0_6"/>
<dbReference type="OMA" id="WRTLMND"/>
<dbReference type="UniPathway" id="UPA00078">
    <property type="reaction ID" value="UER00161"/>
</dbReference>
<dbReference type="Proteomes" id="UP000000558">
    <property type="component" value="Chromosome"/>
</dbReference>
<dbReference type="Proteomes" id="UP000002519">
    <property type="component" value="Chromosome"/>
</dbReference>
<dbReference type="GO" id="GO:0005829">
    <property type="term" value="C:cytosol"/>
    <property type="evidence" value="ECO:0007669"/>
    <property type="project" value="TreeGrafter"/>
</dbReference>
<dbReference type="GO" id="GO:0005524">
    <property type="term" value="F:ATP binding"/>
    <property type="evidence" value="ECO:0007669"/>
    <property type="project" value="UniProtKB-UniRule"/>
</dbReference>
<dbReference type="GO" id="GO:0004141">
    <property type="term" value="F:dethiobiotin synthase activity"/>
    <property type="evidence" value="ECO:0007669"/>
    <property type="project" value="UniProtKB-UniRule"/>
</dbReference>
<dbReference type="GO" id="GO:0000287">
    <property type="term" value="F:magnesium ion binding"/>
    <property type="evidence" value="ECO:0007669"/>
    <property type="project" value="UniProtKB-UniRule"/>
</dbReference>
<dbReference type="GO" id="GO:0009102">
    <property type="term" value="P:biotin biosynthetic process"/>
    <property type="evidence" value="ECO:0007669"/>
    <property type="project" value="UniProtKB-UniRule"/>
</dbReference>
<dbReference type="CDD" id="cd03109">
    <property type="entry name" value="DTBS"/>
    <property type="match status" value="1"/>
</dbReference>
<dbReference type="FunFam" id="3.40.50.300:FF:000292">
    <property type="entry name" value="ATP-dependent dethiobiotin synthetase BioD"/>
    <property type="match status" value="1"/>
</dbReference>
<dbReference type="Gene3D" id="3.40.50.300">
    <property type="entry name" value="P-loop containing nucleotide triphosphate hydrolases"/>
    <property type="match status" value="1"/>
</dbReference>
<dbReference type="HAMAP" id="MF_00336">
    <property type="entry name" value="BioD"/>
    <property type="match status" value="1"/>
</dbReference>
<dbReference type="InterPro" id="IPR004472">
    <property type="entry name" value="DTB_synth_BioD"/>
</dbReference>
<dbReference type="InterPro" id="IPR027417">
    <property type="entry name" value="P-loop_NTPase"/>
</dbReference>
<dbReference type="NCBIfam" id="TIGR00347">
    <property type="entry name" value="bioD"/>
    <property type="match status" value="1"/>
</dbReference>
<dbReference type="PANTHER" id="PTHR43210:SF4">
    <property type="entry name" value="ATP-DEPENDENT DETHIOBIOTIN SYNTHETASE BIOD 2"/>
    <property type="match status" value="1"/>
</dbReference>
<dbReference type="PANTHER" id="PTHR43210">
    <property type="entry name" value="DETHIOBIOTIN SYNTHETASE"/>
    <property type="match status" value="1"/>
</dbReference>
<dbReference type="Pfam" id="PF13500">
    <property type="entry name" value="AAA_26"/>
    <property type="match status" value="1"/>
</dbReference>
<dbReference type="PIRSF" id="PIRSF006755">
    <property type="entry name" value="DTB_synth"/>
    <property type="match status" value="1"/>
</dbReference>
<dbReference type="SUPFAM" id="SSF52540">
    <property type="entry name" value="P-loop containing nucleoside triphosphate hydrolases"/>
    <property type="match status" value="1"/>
</dbReference>
<reference key="1">
    <citation type="journal article" date="2001" name="Nature">
        <title>Genome sequence of enterohaemorrhagic Escherichia coli O157:H7.</title>
        <authorList>
            <person name="Perna N.T."/>
            <person name="Plunkett G. III"/>
            <person name="Burland V."/>
            <person name="Mau B."/>
            <person name="Glasner J.D."/>
            <person name="Rose D.J."/>
            <person name="Mayhew G.F."/>
            <person name="Evans P.S."/>
            <person name="Gregor J."/>
            <person name="Kirkpatrick H.A."/>
            <person name="Posfai G."/>
            <person name="Hackett J."/>
            <person name="Klink S."/>
            <person name="Boutin A."/>
            <person name="Shao Y."/>
            <person name="Miller L."/>
            <person name="Grotbeck E.J."/>
            <person name="Davis N.W."/>
            <person name="Lim A."/>
            <person name="Dimalanta E.T."/>
            <person name="Potamousis K."/>
            <person name="Apodaca J."/>
            <person name="Anantharaman T.S."/>
            <person name="Lin J."/>
            <person name="Yen G."/>
            <person name="Schwartz D.C."/>
            <person name="Welch R.A."/>
            <person name="Blattner F.R."/>
        </authorList>
    </citation>
    <scope>NUCLEOTIDE SEQUENCE [LARGE SCALE GENOMIC DNA]</scope>
    <source>
        <strain>O157:H7 / EDL933 / ATCC 700927 / EHEC</strain>
    </source>
</reference>
<reference key="2">
    <citation type="journal article" date="2001" name="DNA Res.">
        <title>Complete genome sequence of enterohemorrhagic Escherichia coli O157:H7 and genomic comparison with a laboratory strain K-12.</title>
        <authorList>
            <person name="Hayashi T."/>
            <person name="Makino K."/>
            <person name="Ohnishi M."/>
            <person name="Kurokawa K."/>
            <person name="Ishii K."/>
            <person name="Yokoyama K."/>
            <person name="Han C.-G."/>
            <person name="Ohtsubo E."/>
            <person name="Nakayama K."/>
            <person name="Murata T."/>
            <person name="Tanaka M."/>
            <person name="Tobe T."/>
            <person name="Iida T."/>
            <person name="Takami H."/>
            <person name="Honda T."/>
            <person name="Sasakawa C."/>
            <person name="Ogasawara N."/>
            <person name="Yasunaga T."/>
            <person name="Kuhara S."/>
            <person name="Shiba T."/>
            <person name="Hattori M."/>
            <person name="Shinagawa H."/>
        </authorList>
    </citation>
    <scope>NUCLEOTIDE SEQUENCE [LARGE SCALE GENOMIC DNA]</scope>
    <source>
        <strain>O157:H7 / Sakai / RIMD 0509952 / EHEC</strain>
    </source>
</reference>
<evidence type="ECO:0000255" key="1">
    <source>
        <dbReference type="HAMAP-Rule" id="MF_00336"/>
    </source>
</evidence>
<evidence type="ECO:0000305" key="2"/>
<sequence length="231" mass="24981">MLKRFFITGTDTSVGKTVVSRALLQALASQGKTVAGYKPVAKGSKETPEGLRNKDALVLQSVSTIELPYEAVNPIALSEEESSVAHSCPINYTLISNGLANLTEKVDHVVVEGTGGWRSLMNDLRPLSEWVVQEQLPVLMVVGIQEGCINHALLTAQAIANDGLPLIGWVANRINPGLAHYAEIIDVLGKKLPAPLIGELPYLPRAEQRELGQYIRLAMLRSVLAVDRVTV</sequence>
<organism>
    <name type="scientific">Escherichia coli O157:H7</name>
    <dbReference type="NCBI Taxonomy" id="83334"/>
    <lineage>
        <taxon>Bacteria</taxon>
        <taxon>Pseudomonadati</taxon>
        <taxon>Pseudomonadota</taxon>
        <taxon>Gammaproteobacteria</taxon>
        <taxon>Enterobacterales</taxon>
        <taxon>Enterobacteriaceae</taxon>
        <taxon>Escherichia</taxon>
    </lineage>
</organism>
<accession>P0A6F0</accession>
<accession>P77201</accession>
<accession>Q8X788</accession>
<protein>
    <recommendedName>
        <fullName evidence="1">ATP-dependent dethiobiotin synthetase BioD 2</fullName>
        <ecNumber evidence="1">6.3.3.3</ecNumber>
    </recommendedName>
    <alternativeName>
        <fullName evidence="1">DTB synthetase 2</fullName>
        <shortName evidence="1">DTBS 2</shortName>
    </alternativeName>
    <alternativeName>
        <fullName evidence="1">Dethiobiotin synthase 2</fullName>
    </alternativeName>
</protein>
<name>BIOD2_ECO57</name>
<keyword id="KW-0067">ATP-binding</keyword>
<keyword id="KW-0093">Biotin biosynthesis</keyword>
<keyword id="KW-0963">Cytoplasm</keyword>
<keyword id="KW-0436">Ligase</keyword>
<keyword id="KW-0460">Magnesium</keyword>
<keyword id="KW-0479">Metal-binding</keyword>
<keyword id="KW-0547">Nucleotide-binding</keyword>
<keyword id="KW-1185">Reference proteome</keyword>